<feature type="chain" id="PRO_0000268948" description="HTH-type transcriptional repressor NsrR">
    <location>
        <begin position="1"/>
        <end position="141"/>
    </location>
</feature>
<feature type="domain" description="HTH rrf2-type" evidence="1">
    <location>
        <begin position="2"/>
        <end position="129"/>
    </location>
</feature>
<feature type="DNA-binding region" description="H-T-H motif" evidence="1">
    <location>
        <begin position="28"/>
        <end position="51"/>
    </location>
</feature>
<feature type="binding site" evidence="1">
    <location>
        <position position="91"/>
    </location>
    <ligand>
        <name>[2Fe-2S] cluster</name>
        <dbReference type="ChEBI" id="CHEBI:190135"/>
    </ligand>
</feature>
<feature type="binding site" evidence="1">
    <location>
        <position position="96"/>
    </location>
    <ligand>
        <name>[2Fe-2S] cluster</name>
        <dbReference type="ChEBI" id="CHEBI:190135"/>
    </ligand>
</feature>
<feature type="binding site" evidence="1">
    <location>
        <position position="102"/>
    </location>
    <ligand>
        <name>[2Fe-2S] cluster</name>
        <dbReference type="ChEBI" id="CHEBI:190135"/>
    </ligand>
</feature>
<sequence>MQLTSFTDYGLRALIYMASLPEGRMTSISEVTDVYGVSRNHMVKIINQLSRAGYVTAVRGKNGGIRLGKPASAIRIGDVVRELEPLSLVNCSSEFCHITPACRLKQALSKAVQSFLTELDNYTLADLVEENQPLYKLLLVE</sequence>
<proteinExistence type="inferred from homology"/>
<protein>
    <recommendedName>
        <fullName evidence="1">HTH-type transcriptional repressor NsrR</fullName>
    </recommendedName>
</protein>
<evidence type="ECO:0000255" key="1">
    <source>
        <dbReference type="HAMAP-Rule" id="MF_01177"/>
    </source>
</evidence>
<comment type="function">
    <text evidence="1">Nitric oxide-sensitive repressor of genes involved in protecting the cell against nitrosative stress. May require iron for activity.</text>
</comment>
<comment type="cofactor">
    <cofactor evidence="1">
        <name>[2Fe-2S] cluster</name>
        <dbReference type="ChEBI" id="CHEBI:190135"/>
    </cofactor>
    <text evidence="1">Binds 1 [2Fe-2S] cluster per subunit.</text>
</comment>
<organism>
    <name type="scientific">Shigella boydii serotype 4 (strain Sb227)</name>
    <dbReference type="NCBI Taxonomy" id="300268"/>
    <lineage>
        <taxon>Bacteria</taxon>
        <taxon>Pseudomonadati</taxon>
        <taxon>Pseudomonadota</taxon>
        <taxon>Gammaproteobacteria</taxon>
        <taxon>Enterobacterales</taxon>
        <taxon>Enterobacteriaceae</taxon>
        <taxon>Shigella</taxon>
    </lineage>
</organism>
<name>NSRR_SHIBS</name>
<reference key="1">
    <citation type="journal article" date="2005" name="Nucleic Acids Res.">
        <title>Genome dynamics and diversity of Shigella species, the etiologic agents of bacillary dysentery.</title>
        <authorList>
            <person name="Yang F."/>
            <person name="Yang J."/>
            <person name="Zhang X."/>
            <person name="Chen L."/>
            <person name="Jiang Y."/>
            <person name="Yan Y."/>
            <person name="Tang X."/>
            <person name="Wang J."/>
            <person name="Xiong Z."/>
            <person name="Dong J."/>
            <person name="Xue Y."/>
            <person name="Zhu Y."/>
            <person name="Xu X."/>
            <person name="Sun L."/>
            <person name="Chen S."/>
            <person name="Nie H."/>
            <person name="Peng J."/>
            <person name="Xu J."/>
            <person name="Wang Y."/>
            <person name="Yuan Z."/>
            <person name="Wen Y."/>
            <person name="Yao Z."/>
            <person name="Shen Y."/>
            <person name="Qiang B."/>
            <person name="Hou Y."/>
            <person name="Yu J."/>
            <person name="Jin Q."/>
        </authorList>
    </citation>
    <scope>NUCLEOTIDE SEQUENCE [LARGE SCALE GENOMIC DNA]</scope>
    <source>
        <strain>Sb227</strain>
    </source>
</reference>
<accession>Q31TA8</accession>
<dbReference type="EMBL" id="CP000036">
    <property type="protein sequence ID" value="ABB68700.1"/>
    <property type="molecule type" value="Genomic_DNA"/>
</dbReference>
<dbReference type="RefSeq" id="WP_001177639.1">
    <property type="nucleotide sequence ID" value="NC_007613.1"/>
</dbReference>
<dbReference type="SMR" id="Q31TA8"/>
<dbReference type="GeneID" id="93777643"/>
<dbReference type="KEGG" id="sbo:SBO_4278"/>
<dbReference type="HOGENOM" id="CLU_107144_2_1_6"/>
<dbReference type="Proteomes" id="UP000007067">
    <property type="component" value="Chromosome"/>
</dbReference>
<dbReference type="GO" id="GO:0005829">
    <property type="term" value="C:cytosol"/>
    <property type="evidence" value="ECO:0007669"/>
    <property type="project" value="TreeGrafter"/>
</dbReference>
<dbReference type="GO" id="GO:0051537">
    <property type="term" value="F:2 iron, 2 sulfur cluster binding"/>
    <property type="evidence" value="ECO:0007669"/>
    <property type="project" value="UniProtKB-KW"/>
</dbReference>
<dbReference type="GO" id="GO:0003700">
    <property type="term" value="F:DNA-binding transcription factor activity"/>
    <property type="evidence" value="ECO:0007669"/>
    <property type="project" value="UniProtKB-UniRule"/>
</dbReference>
<dbReference type="GO" id="GO:0003690">
    <property type="term" value="F:double-stranded DNA binding"/>
    <property type="evidence" value="ECO:0007669"/>
    <property type="project" value="UniProtKB-UniRule"/>
</dbReference>
<dbReference type="GO" id="GO:0005506">
    <property type="term" value="F:iron ion binding"/>
    <property type="evidence" value="ECO:0007669"/>
    <property type="project" value="UniProtKB-UniRule"/>
</dbReference>
<dbReference type="GO" id="GO:0045892">
    <property type="term" value="P:negative regulation of DNA-templated transcription"/>
    <property type="evidence" value="ECO:0007669"/>
    <property type="project" value="InterPro"/>
</dbReference>
<dbReference type="FunFam" id="1.10.10.10:FF:000105">
    <property type="entry name" value="HTH-type transcriptional repressor NsrR"/>
    <property type="match status" value="1"/>
</dbReference>
<dbReference type="Gene3D" id="1.10.10.10">
    <property type="entry name" value="Winged helix-like DNA-binding domain superfamily/Winged helix DNA-binding domain"/>
    <property type="match status" value="1"/>
</dbReference>
<dbReference type="HAMAP" id="MF_01177">
    <property type="entry name" value="HTH_type_NsrR"/>
    <property type="match status" value="1"/>
</dbReference>
<dbReference type="InterPro" id="IPR030489">
    <property type="entry name" value="TR_Rrf2-type_CS"/>
</dbReference>
<dbReference type="InterPro" id="IPR000944">
    <property type="entry name" value="Tscrpt_reg_Rrf2"/>
</dbReference>
<dbReference type="InterPro" id="IPR023761">
    <property type="entry name" value="Tscrpt_rep_HTH_NsrR"/>
</dbReference>
<dbReference type="InterPro" id="IPR036388">
    <property type="entry name" value="WH-like_DNA-bd_sf"/>
</dbReference>
<dbReference type="InterPro" id="IPR036390">
    <property type="entry name" value="WH_DNA-bd_sf"/>
</dbReference>
<dbReference type="NCBIfam" id="NF008240">
    <property type="entry name" value="PRK11014.1"/>
    <property type="match status" value="1"/>
</dbReference>
<dbReference type="NCBIfam" id="TIGR00738">
    <property type="entry name" value="rrf2_super"/>
    <property type="match status" value="1"/>
</dbReference>
<dbReference type="PANTHER" id="PTHR33221:SF4">
    <property type="entry name" value="HTH-TYPE TRANSCRIPTIONAL REPRESSOR NSRR"/>
    <property type="match status" value="1"/>
</dbReference>
<dbReference type="PANTHER" id="PTHR33221">
    <property type="entry name" value="WINGED HELIX-TURN-HELIX TRANSCRIPTIONAL REGULATOR, RRF2 FAMILY"/>
    <property type="match status" value="1"/>
</dbReference>
<dbReference type="Pfam" id="PF02082">
    <property type="entry name" value="Rrf2"/>
    <property type="match status" value="1"/>
</dbReference>
<dbReference type="SUPFAM" id="SSF46785">
    <property type="entry name" value="Winged helix' DNA-binding domain"/>
    <property type="match status" value="1"/>
</dbReference>
<dbReference type="PROSITE" id="PS01332">
    <property type="entry name" value="HTH_RRF2_1"/>
    <property type="match status" value="1"/>
</dbReference>
<dbReference type="PROSITE" id="PS51197">
    <property type="entry name" value="HTH_RRF2_2"/>
    <property type="match status" value="1"/>
</dbReference>
<gene>
    <name evidence="1" type="primary">nsrR</name>
    <name type="ordered locus">SBO_4278</name>
</gene>
<keyword id="KW-0001">2Fe-2S</keyword>
<keyword id="KW-0238">DNA-binding</keyword>
<keyword id="KW-0408">Iron</keyword>
<keyword id="KW-0411">Iron-sulfur</keyword>
<keyword id="KW-0479">Metal-binding</keyword>
<keyword id="KW-0678">Repressor</keyword>
<keyword id="KW-0804">Transcription</keyword>
<keyword id="KW-0805">Transcription regulation</keyword>